<name>AGO_METJA</name>
<feature type="chain" id="PRO_0000107275" description="Protein argonaute">
    <location>
        <begin position="1"/>
        <end position="713"/>
    </location>
</feature>
<feature type="domain" description="PAZ" evidence="2 7 10">
    <location>
        <begin position="164"/>
        <end position="257"/>
    </location>
</feature>
<feature type="domain" description="Piwi" evidence="3 7 10">
    <location>
        <begin position="426"/>
        <end position="699"/>
    </location>
</feature>
<feature type="region of interest" description="N-terminal domain" evidence="7 10">
    <location>
        <begin position="18"/>
        <end position="129"/>
    </location>
</feature>
<feature type="region of interest" description="Binds 3'-end of gDNA" evidence="7 14">
    <location>
        <begin position="213"/>
        <end position="218"/>
    </location>
</feature>
<feature type="region of interest" description="Mid domain" evidence="7 10">
    <location>
        <begin position="346"/>
        <end position="488"/>
    </location>
</feature>
<feature type="region of interest" description="Binds 5'-phosphorylated end of gDNA" evidence="7 14">
    <location>
        <begin position="457"/>
        <end position="460"/>
    </location>
</feature>
<feature type="region of interest" description="Binds 5'-phosphorylated end of gDNA" evidence="7 14">
    <location>
        <begin position="625"/>
        <end position="632"/>
    </location>
</feature>
<feature type="region of interest" description="Binds 5'-phosphorylated end of gDNA" evidence="7 14">
    <location>
        <begin position="678"/>
        <end position="679"/>
    </location>
</feature>
<feature type="active site" evidence="1">
    <location>
        <position position="504"/>
    </location>
</feature>
<feature type="active site" evidence="1">
    <location>
        <position position="541"/>
    </location>
</feature>
<feature type="active site" evidence="1">
    <location>
        <position position="570"/>
    </location>
</feature>
<feature type="active site" evidence="1">
    <location>
        <position position="688"/>
    </location>
</feature>
<feature type="binding site" evidence="14">
    <location>
        <position position="457"/>
    </location>
    <ligand>
        <name>a divalent metal cation</name>
        <dbReference type="ChEBI" id="CHEBI:60240"/>
    </ligand>
</feature>
<feature type="binding site" evidence="12">
    <location>
        <position position="479"/>
    </location>
    <ligand>
        <name>a divalent metal cation</name>
        <dbReference type="ChEBI" id="CHEBI:60240"/>
    </ligand>
</feature>
<feature type="binding site" evidence="12">
    <location>
        <position position="483"/>
    </location>
    <ligand>
        <name>a divalent metal cation</name>
        <dbReference type="ChEBI" id="CHEBI:60240"/>
    </ligand>
</feature>
<feature type="binding site" evidence="1">
    <location>
        <position position="504"/>
    </location>
    <ligand>
        <name>Mn(2+)</name>
        <dbReference type="ChEBI" id="CHEBI:29035"/>
        <label>1</label>
    </ligand>
</feature>
<feature type="binding site" evidence="1">
    <location>
        <position position="504"/>
    </location>
    <ligand>
        <name>Mn(2+)</name>
        <dbReference type="ChEBI" id="CHEBI:29035"/>
        <label>2</label>
    </ligand>
</feature>
<feature type="binding site" evidence="1">
    <location>
        <position position="570"/>
    </location>
    <ligand>
        <name>Mn(2+)</name>
        <dbReference type="ChEBI" id="CHEBI:29035"/>
        <label>1</label>
    </ligand>
</feature>
<feature type="binding site" evidence="1">
    <location>
        <position position="688"/>
    </location>
    <ligand>
        <name>Mn(2+)</name>
        <dbReference type="ChEBI" id="CHEBI:29035"/>
        <label>2</label>
    </ligand>
</feature>
<feature type="binding site" evidence="1">
    <location>
        <position position="713"/>
    </location>
    <ligand>
        <name>Mn(2+)</name>
        <dbReference type="ChEBI" id="CHEBI:29035"/>
        <label>3</label>
    </ligand>
</feature>
<feature type="site" description="Interacts with gDNA" evidence="7 14">
    <location>
        <position position="107"/>
    </location>
</feature>
<feature type="site" description="Interacts with gDNA" evidence="7 14">
    <location>
        <position position="157"/>
    </location>
</feature>
<feature type="site" description="Interacts with gDNA" evidence="7 14">
    <location>
        <position position="191"/>
    </location>
</feature>
<feature type="site" description="Interacts with 3'-end of gDNA" evidence="7 14">
    <location>
        <position position="194"/>
    </location>
</feature>
<feature type="site" description="Interacts with gDNA" evidence="7 14">
    <location>
        <position position="217"/>
    </location>
</feature>
<feature type="site" description="Interacts with gDNA" evidence="7 14">
    <location>
        <position position="479"/>
    </location>
</feature>
<feature type="site" description="Interacts with gDNA" evidence="7 14">
    <location>
        <position position="669"/>
    </location>
</feature>
<feature type="mutagenesis site" description="No guide-independent plasmid cleavage. Loss of guide-dependent cleavage of tDNA." evidence="6 7">
    <original>Y</original>
    <variation>A</variation>
    <location>
        <position position="194"/>
    </location>
</feature>
<feature type="mutagenesis site" description="Significantly reduced guide-independent plasmid cleavage. Decreased guide-dependent cleavage of tDNA." evidence="6 7">
    <original>H</original>
    <variation>A</variation>
    <location>
        <position position="213"/>
    </location>
</feature>
<feature type="mutagenesis site" description="Significantly reduced guide-independent plasmid cleavage. Decreased guide-dependent cleavage of tDNA." evidence="6 7">
    <original>Y</original>
    <variation>A</variation>
    <location>
        <position position="217"/>
    </location>
</feature>
<feature type="mutagenesis site" description="Nearly complete loss of guide-independent plasmid cleavage. Loss of guide-dependent cleavage of tDNA." evidence="6 7">
    <original>E</original>
    <variation>A</variation>
    <location>
        <position position="246"/>
    </location>
</feature>
<feature type="mutagenesis site" description="Loss of guide-dependent cleavage of tDNA when gDNA starts with 5'-dT but not 5'-dG." evidence="7">
    <original>L</original>
    <variation>P</variation>
    <location>
        <position position="270"/>
    </location>
</feature>
<feature type="mutagenesis site" description="No change in guide-dependent cleavage of tDNA." evidence="7">
    <original>W</original>
    <variation>V</variation>
    <location>
        <position position="274"/>
    </location>
</feature>
<feature type="mutagenesis site" description="Wild-type guide-dependent cleavage of tDNA." evidence="7">
    <original>K</original>
    <variation>A</variation>
    <location>
        <position position="435"/>
    </location>
</feature>
<feature type="mutagenesis site" description="No guide-independent plasmid cleavage. Decreased guide-dependent cleavage of tDNA." evidence="6 7">
    <original>D</original>
    <variation>P</variation>
    <location>
        <position position="438"/>
    </location>
</feature>
<feature type="mutagenesis site" description="Alters binding kinetics of gDNA, probably due to loss of Mid domain binding to 5'-end of gDNA." evidence="6">
    <original>Y</original>
    <variation>A</variation>
    <location>
        <position position="442"/>
    </location>
</feature>
<feature type="mutagenesis site" description="Loss of guide-dependent cleavage of tDNA." evidence="7">
    <original>Q</original>
    <variation>A</variation>
    <location>
        <position position="457"/>
    </location>
</feature>
<feature type="mutagenesis site" description="Loss of guide-dependent cleavage of tDNA." evidence="7">
    <original>N</original>
    <variation>A</variation>
    <location>
        <position position="458"/>
    </location>
</feature>
<feature type="mutagenesis site" description="Decreased guide-dependent cleavage of tDNA." evidence="7">
    <original>Q</original>
    <variation>A</variation>
    <location>
        <position position="479"/>
    </location>
</feature>
<feature type="mutagenesis site" description="No guide-independent plasmid cleavage. Loss of guide-dependent cleavage of tDNA." evidence="6 7">
    <original>K</original>
    <variation>A</variation>
    <location>
        <position position="483"/>
    </location>
</feature>
<feature type="mutagenesis site" description="No guide-dependent or -independent cleavage of tDNA." evidence="6">
    <original>E</original>
    <variation>A</variation>
    <location>
        <position position="541"/>
    </location>
</feature>
<feature type="mutagenesis site" description="Loss of guide-dependent cleavage of tDNA when gDNA starts with 5'-dT but not 5'-dG." evidence="7">
    <original>F</original>
    <variation>A</variation>
    <location>
        <position position="572"/>
    </location>
</feature>
<feature type="mutagenesis site" description="Loss of guide-dependent cleavage of tDNA when gDNA starts with 5'-dT but not 5'-dG." evidence="7">
    <original>Q</original>
    <variation>A</variation>
    <location>
        <position position="574"/>
    </location>
</feature>
<feature type="mutagenesis site" description="Loss of guide-dependent cleavage of tDNA when gDNA starts with 5'-dT but not 5'-dG." evidence="7">
    <original>N</original>
    <variation>A</variation>
    <location>
        <position position="575"/>
    </location>
</feature>
<feature type="turn" evidence="16">
    <location>
        <begin position="2"/>
        <end position="4"/>
    </location>
</feature>
<feature type="strand" evidence="15">
    <location>
        <begin position="5"/>
        <end position="15"/>
    </location>
</feature>
<feature type="helix" evidence="15">
    <location>
        <begin position="17"/>
        <end position="19"/>
    </location>
</feature>
<feature type="strand" evidence="15">
    <location>
        <begin position="22"/>
        <end position="29"/>
    </location>
</feature>
<feature type="helix" evidence="15">
    <location>
        <begin position="39"/>
        <end position="45"/>
    </location>
</feature>
<feature type="strand" evidence="15">
    <location>
        <begin position="49"/>
        <end position="52"/>
    </location>
</feature>
<feature type="turn" evidence="15">
    <location>
        <begin position="53"/>
        <end position="56"/>
    </location>
</feature>
<feature type="strand" evidence="15">
    <location>
        <begin position="57"/>
        <end position="62"/>
    </location>
</feature>
<feature type="strand" evidence="16">
    <location>
        <begin position="65"/>
        <end position="69"/>
    </location>
</feature>
<feature type="strand" evidence="15">
    <location>
        <begin position="82"/>
        <end position="89"/>
    </location>
</feature>
<feature type="helix" evidence="15">
    <location>
        <begin position="90"/>
        <end position="92"/>
    </location>
</feature>
<feature type="helix" evidence="15">
    <location>
        <begin position="95"/>
        <end position="108"/>
    </location>
</feature>
<feature type="helix" evidence="15">
    <location>
        <begin position="112"/>
        <end position="120"/>
    </location>
</feature>
<feature type="strand" evidence="16">
    <location>
        <begin position="127"/>
        <end position="129"/>
    </location>
</feature>
<feature type="strand" evidence="15">
    <location>
        <begin position="132"/>
        <end position="145"/>
    </location>
</feature>
<feature type="strand" evidence="15">
    <location>
        <begin position="148"/>
        <end position="163"/>
    </location>
</feature>
<feature type="helix" evidence="15">
    <location>
        <begin position="165"/>
        <end position="168"/>
    </location>
</feature>
<feature type="turn" evidence="15">
    <location>
        <begin position="169"/>
        <end position="171"/>
    </location>
</feature>
<feature type="helix" evidence="15">
    <location>
        <begin position="173"/>
        <end position="177"/>
    </location>
</feature>
<feature type="turn" evidence="15">
    <location>
        <begin position="178"/>
        <end position="181"/>
    </location>
</feature>
<feature type="strand" evidence="15">
    <location>
        <begin position="183"/>
        <end position="186"/>
    </location>
</feature>
<feature type="strand" evidence="15">
    <location>
        <begin position="189"/>
        <end position="198"/>
    </location>
</feature>
<feature type="helix" evidence="15">
    <location>
        <begin position="204"/>
        <end position="217"/>
    </location>
</feature>
<feature type="helix" evidence="15">
    <location>
        <begin position="223"/>
        <end position="229"/>
    </location>
</feature>
<feature type="strand" evidence="15">
    <location>
        <begin position="239"/>
        <end position="243"/>
    </location>
</feature>
<feature type="strand" evidence="16">
    <location>
        <begin position="245"/>
        <end position="248"/>
    </location>
</feature>
<feature type="helix" evidence="15">
    <location>
        <begin position="250"/>
        <end position="252"/>
    </location>
</feature>
<feature type="strand" evidence="15">
    <location>
        <begin position="253"/>
        <end position="258"/>
    </location>
</feature>
<feature type="helix" evidence="16">
    <location>
        <begin position="259"/>
        <end position="261"/>
    </location>
</feature>
<feature type="helix" evidence="15">
    <location>
        <begin position="264"/>
        <end position="269"/>
    </location>
</feature>
<feature type="helix" evidence="15">
    <location>
        <begin position="272"/>
        <end position="274"/>
    </location>
</feature>
<feature type="helix" evidence="15">
    <location>
        <begin position="278"/>
        <end position="291"/>
    </location>
</feature>
<feature type="strand" evidence="15">
    <location>
        <begin position="300"/>
        <end position="306"/>
    </location>
</feature>
<feature type="strand" evidence="15">
    <location>
        <begin position="312"/>
        <end position="315"/>
    </location>
</feature>
<feature type="strand" evidence="15">
    <location>
        <begin position="321"/>
        <end position="325"/>
    </location>
</feature>
<feature type="helix" evidence="15">
    <location>
        <begin position="327"/>
        <end position="329"/>
    </location>
</feature>
<feature type="helix" evidence="15">
    <location>
        <begin position="332"/>
        <end position="334"/>
    </location>
</feature>
<feature type="strand" evidence="15">
    <location>
        <begin position="337"/>
        <end position="339"/>
    </location>
</feature>
<feature type="turn" evidence="15">
    <location>
        <begin position="349"/>
        <end position="353"/>
    </location>
</feature>
<feature type="strand" evidence="15">
    <location>
        <begin position="355"/>
        <end position="363"/>
    </location>
</feature>
<feature type="helix" evidence="15">
    <location>
        <begin position="364"/>
        <end position="369"/>
    </location>
</feature>
<feature type="helix" evidence="15">
    <location>
        <begin position="370"/>
        <end position="388"/>
    </location>
</feature>
<feature type="strand" evidence="15">
    <location>
        <begin position="391"/>
        <end position="393"/>
    </location>
</feature>
<feature type="strand" evidence="15">
    <location>
        <begin position="395"/>
        <end position="397"/>
    </location>
</feature>
<feature type="strand" evidence="15">
    <location>
        <begin position="402"/>
        <end position="405"/>
    </location>
</feature>
<feature type="helix" evidence="15">
    <location>
        <begin position="410"/>
        <end position="418"/>
    </location>
</feature>
<feature type="strand" evidence="15">
    <location>
        <begin position="426"/>
        <end position="432"/>
    </location>
</feature>
<feature type="helix" evidence="15">
    <location>
        <begin position="436"/>
        <end position="439"/>
    </location>
</feature>
<feature type="helix" evidence="15">
    <location>
        <begin position="440"/>
        <end position="450"/>
    </location>
</feature>
<feature type="turn" evidence="15">
    <location>
        <begin position="451"/>
        <end position="453"/>
    </location>
</feature>
<feature type="strand" evidence="15">
    <location>
        <begin position="454"/>
        <end position="460"/>
    </location>
</feature>
<feature type="helix" evidence="15">
    <location>
        <begin position="461"/>
        <end position="465"/>
    </location>
</feature>
<feature type="helix" evidence="16">
    <location>
        <begin position="468"/>
        <end position="470"/>
    </location>
</feature>
<feature type="helix" evidence="15">
    <location>
        <begin position="471"/>
        <end position="483"/>
    </location>
</feature>
<feature type="strand" evidence="15">
    <location>
        <begin position="490"/>
        <end position="493"/>
    </location>
</feature>
<feature type="strand" evidence="15">
    <location>
        <begin position="498"/>
        <end position="504"/>
    </location>
</feature>
<feature type="strand" evidence="15">
    <location>
        <begin position="514"/>
        <end position="523"/>
    </location>
</feature>
<feature type="strand" evidence="15">
    <location>
        <begin position="528"/>
        <end position="535"/>
    </location>
</feature>
<feature type="helix" evidence="15">
    <location>
        <begin position="545"/>
        <end position="554"/>
    </location>
</feature>
<feature type="strand" evidence="15">
    <location>
        <begin position="564"/>
        <end position="571"/>
    </location>
</feature>
<feature type="helix" evidence="15">
    <location>
        <begin position="575"/>
        <end position="588"/>
    </location>
</feature>
<feature type="strand" evidence="15">
    <location>
        <begin position="591"/>
        <end position="600"/>
    </location>
</feature>
<feature type="strand" evidence="15">
    <location>
        <begin position="611"/>
        <end position="616"/>
    </location>
</feature>
<feature type="strand" evidence="15">
    <location>
        <begin position="619"/>
        <end position="623"/>
    </location>
</feature>
<feature type="strand" evidence="15">
    <location>
        <begin position="634"/>
        <end position="643"/>
    </location>
</feature>
<feature type="strand" evidence="15">
    <location>
        <begin position="646"/>
        <end position="650"/>
    </location>
</feature>
<feature type="helix" evidence="15">
    <location>
        <begin position="654"/>
        <end position="664"/>
    </location>
</feature>
<feature type="strand" evidence="15">
    <location>
        <begin position="672"/>
        <end position="677"/>
    </location>
</feature>
<feature type="helix" evidence="15">
    <location>
        <begin position="682"/>
        <end position="695"/>
    </location>
</feature>
<feature type="helix" evidence="15">
    <location>
        <begin position="702"/>
        <end position="706"/>
    </location>
</feature>
<sequence>MVLNKVTYKINAYKIKEEFIPKEVHFYRIKSFVNEAFNFYRFVNFYGGMIINKKDKSFVLPYKVDNKVLKYKDGNNEIPIDIEYIKSLKLEYVKPEIAEKLVRGYLKSVHKIEPELSRIIKNIRKHKVVENIKVESYCEYEVKKHDGDYYLILNFRHTASITKHLWDFVNRDKALLEEYVGKKIIFKPNPKVRYTISLVDAPNPQKIEEIMSHIIKYYKWSEDMVKSTFGEIDYNQPIMYCEEILEPFAPQFCNLVFYMDELDSYILKELQSYWRLSNENKGKIINEIAKKLRFIDNTPKELEFMKFNNTPLLVKDVNKNPTKIYSTNTLFTWIYNQNAKIYLPYDVPEIIRNKNLLTYILIDEEIKDELKAIKDKVNKMFRNYNKIANKTELPKFNYANRWKYFSTDDIRGIIKEIKSEFNDEICFALIIGKEKYKDNDYYEILKKQLFDLKIISQNILWENWRKDDKGYMTNNLLIQIMGKLGIKYFILDSKTPYDYIMGLDTGLGIFGNHRVGGCTVVYDSEGKIRRIQPIETPAPGERLHLPYVIEYLENKANIDMENKNILFLRDGFIQNSERNDLKEISKELNSNIEVISIRKNNKYKVFTSDYRIGSVFGNDGIFLPHKTPFGSNPVKLSTWLRFNCGNEEGLKINESIMQLLYDLTKMNYSALYGEGRYLRIPAPIHYADKFVKALGKNWKIDEELLKHGFLYFI</sequence>
<accession>Q58717</accession>
<organism>
    <name type="scientific">Methanocaldococcus jannaschii (strain ATCC 43067 / DSM 2661 / JAL-1 / JCM 10045 / NBRC 100440)</name>
    <name type="common">Methanococcus jannaschii</name>
    <dbReference type="NCBI Taxonomy" id="243232"/>
    <lineage>
        <taxon>Archaea</taxon>
        <taxon>Methanobacteriati</taxon>
        <taxon>Methanobacteriota</taxon>
        <taxon>Methanomada group</taxon>
        <taxon>Methanococci</taxon>
        <taxon>Methanococcales</taxon>
        <taxon>Methanocaldococcaceae</taxon>
        <taxon>Methanocaldococcus</taxon>
    </lineage>
</organism>
<gene>
    <name evidence="9" type="primary">ago</name>
    <name type="ordered locus">MJ1321</name>
</gene>
<evidence type="ECO:0000250" key="1">
    <source>
        <dbReference type="UniProtKB" id="Q746M7"/>
    </source>
</evidence>
<evidence type="ECO:0000255" key="2">
    <source>
        <dbReference type="PROSITE-ProRule" id="PRU00142"/>
    </source>
</evidence>
<evidence type="ECO:0000255" key="3">
    <source>
        <dbReference type="PROSITE-ProRule" id="PRU00150"/>
    </source>
</evidence>
<evidence type="ECO:0000269" key="4">
    <source>
    </source>
</evidence>
<evidence type="ECO:0000269" key="5">
    <source>
    </source>
</evidence>
<evidence type="ECO:0000269" key="6">
    <source>
    </source>
</evidence>
<evidence type="ECO:0000269" key="7">
    <source>
    </source>
</evidence>
<evidence type="ECO:0000303" key="8">
    <source>
    </source>
</evidence>
<evidence type="ECO:0000305" key="9"/>
<evidence type="ECO:0000305" key="10">
    <source>
    </source>
</evidence>
<evidence type="ECO:0000305" key="11">
    <source>
    </source>
</evidence>
<evidence type="ECO:0000305" key="12">
    <source>
    </source>
</evidence>
<evidence type="ECO:0007744" key="13">
    <source>
        <dbReference type="PDB" id="5G5S"/>
    </source>
</evidence>
<evidence type="ECO:0007744" key="14">
    <source>
        <dbReference type="PDB" id="5G5T"/>
    </source>
</evidence>
<evidence type="ECO:0007829" key="15">
    <source>
        <dbReference type="PDB" id="5G5S"/>
    </source>
</evidence>
<evidence type="ECO:0007829" key="16">
    <source>
        <dbReference type="PDB" id="5G5T"/>
    </source>
</evidence>
<proteinExistence type="evidence at protein level"/>
<comment type="function">
    <text evidence="4 5 6 7 11">A DNA-guided ssDNA endonuclease that may play a role in defense against invading genetic elements. Uses short ssDNA sequences as guides (gDNA) to bind complementary target strands, resulting in slicing of the target DNA (tDNA) (PubMed:24442234, PubMed:27741323, PubMed:28319081, PubMed:28319084). Endonucleolytically cleaves tDNA (the gDNA indicates where to cleave); two major and two minor products are seen which correspond to cleavage sites between nucleotides 9/10, 10/11, 13/14, and 14/15 downstream of the target residue base-paired with the 5'-end of the gDNA (PubMed:24442234, PubMed:27741323, PubMed:28319081, PubMed:28319084). Efficient guide-dependent tDNA cleavage requires a minimal length of 15 bp and is maximal at 19 bp (PubMed:28319081). Prefers gDNA with 5'-phosphorylated purines and 3'-pyrimidines; changing these bases alters the cleavage activity and patterns (PubMed:28319084). Also has guide-independent activity on tDNA called 'chopping' (PubMed:28319081). Probably a first round of guide-independent activity on an invading plasmid or virus would generate guide DNAs for subsequent, more efficient, guide-dependent degradation of invading nucleic acids (PubMed:28319081). Has no activity on substrate with a mismatch at positions 10 and 11, on ssDNA or RNA, nor on DNA:RNA hybrids (PubMed:24442234). Digests longer (750 bp) dsDNA as well as circular plasmid and naked genomic DNA, but not chromatin, in a guide DNA-independent manner (PubMed:28319081). Addition of endogenous histone A3 protects DNA from cleavage, while cleavage is insensitive to methylation (PubMed:28319081). When plasmid encoding active or mutated protein (Ala-541) is transformed into Sulfolobus acidocaldarius about 25-fold fewer transformants are found with active protein; reduced levels of plasmid are found in wild-type transformed cells. While S.acidocaldarius grows at a similar temperature to M.jannaschii (70 to 80 degrees Celsius) it has very different histone-like proteins, which presumably do not protect against MjAgo (PubMed:28319081). Binds ssDNA, dsDNA and DNA-RNA hybrids; binding is most efficient with dsDNA (PubMed:24442234).</text>
</comment>
<comment type="cofactor">
    <cofactor evidence="4 7">
        <name>a divalent metal cation</name>
        <dbReference type="ChEBI" id="CHEBI:60240"/>
    </cofactor>
    <text evidence="1 7">Also liganded by DNA (PubMed:28319084). Cleavage probaby requires 2 divalent metal cations (By similarity).</text>
</comment>
<comment type="activity regulation">
    <text evidence="4 6">DNA cleavage is inhibited by EDTA.</text>
</comment>
<comment type="biophysicochemical properties">
    <temperatureDependence>
        <text evidence="4">Optimum temperature is over 75 degrees Celsius for DNA cleavage, DNA-binding occurs below that.</text>
    </temperatureDependence>
</comment>
<comment type="induction">
    <text evidence="11">Constitutively expressed (at protein level) (PubMed:28319081).</text>
</comment>
<comment type="domain">
    <text evidence="7 10">Has 4 structurally distinct domains; N-terminal, PAZ (binds the 3'-end of gDNA), Mid (binds the phosphorylated 5'-end of gDNA) and PIWI (binds near the 5'-end of gDNA) arranged in a bilobal manner (PubMed:28319084). Upon binding of gDNA the PAZ and Mid domains separate, opening a channel probably for tDNA-binding; a smaller channel also opens between the N-terminal and PIWI domains (PubMed:28319084). The N-terminal and PAZ domains undergo further major rearrangement when the binary Ago-guide DNA complex binds tDNA; the PAZ domain binds the 3'-end of gDNA in the absence of target, upon ternary complex formation it is probably the N-terminal domain that binds that end of the dsDNA (PubMed:24442234). The PIWI domain assumes an RNase H fold and has the catalytic residues (PubMed:28319084).</text>
</comment>
<comment type="similarity">
    <text evidence="9">Belongs to the argonaute family. Long pAgo subfamily.</text>
</comment>
<protein>
    <recommendedName>
        <fullName evidence="8">Protein argonaute</fullName>
        <shortName evidence="8">MjAgo</shortName>
        <ecNumber evidence="4">3.1.24.-</ecNumber>
    </recommendedName>
</protein>
<keyword id="KW-0002">3D-structure</keyword>
<keyword id="KW-0051">Antiviral defense</keyword>
<keyword id="KW-0238">DNA-binding</keyword>
<keyword id="KW-0255">Endonuclease</keyword>
<keyword id="KW-0378">Hydrolase</keyword>
<keyword id="KW-0464">Manganese</keyword>
<keyword id="KW-0479">Metal-binding</keyword>
<keyword id="KW-0540">Nuclease</keyword>
<keyword id="KW-1185">Reference proteome</keyword>
<reference key="1">
    <citation type="journal article" date="1996" name="Science">
        <title>Complete genome sequence of the methanogenic archaeon, Methanococcus jannaschii.</title>
        <authorList>
            <person name="Bult C.J."/>
            <person name="White O."/>
            <person name="Olsen G.J."/>
            <person name="Zhou L."/>
            <person name="Fleischmann R.D."/>
            <person name="Sutton G.G."/>
            <person name="Blake J.A."/>
            <person name="FitzGerald L.M."/>
            <person name="Clayton R.A."/>
            <person name="Gocayne J.D."/>
            <person name="Kerlavage A.R."/>
            <person name="Dougherty B.A."/>
            <person name="Tomb J.-F."/>
            <person name="Adams M.D."/>
            <person name="Reich C.I."/>
            <person name="Overbeek R."/>
            <person name="Kirkness E.F."/>
            <person name="Weinstock K.G."/>
            <person name="Merrick J.M."/>
            <person name="Glodek A."/>
            <person name="Scott J.L."/>
            <person name="Geoghagen N.S.M."/>
            <person name="Weidman J.F."/>
            <person name="Fuhrmann J.L."/>
            <person name="Nguyen D."/>
            <person name="Utterback T.R."/>
            <person name="Kelley J.M."/>
            <person name="Peterson J.D."/>
            <person name="Sadow P.W."/>
            <person name="Hanna M.C."/>
            <person name="Cotton M.D."/>
            <person name="Roberts K.M."/>
            <person name="Hurst M.A."/>
            <person name="Kaine B.P."/>
            <person name="Borodovsky M."/>
            <person name="Klenk H.-P."/>
            <person name="Fraser C.M."/>
            <person name="Smith H.O."/>
            <person name="Woese C.R."/>
            <person name="Venter J.C."/>
        </authorList>
    </citation>
    <scope>NUCLEOTIDE SEQUENCE [LARGE SCALE GENOMIC DNA]</scope>
    <source>
        <strain>ATCC 43067 / DSM 2661 / JAL-1 / JCM 10045 / NBRC 100440</strain>
    </source>
</reference>
<reference key="2">
    <citation type="journal article" date="2014" name="RNA Biol.">
        <title>Single-molecule FRET supports the two-state model of Argonaute action.</title>
        <authorList>
            <person name="Zander A."/>
            <person name="Holzmeister P."/>
            <person name="Klose D."/>
            <person name="Tinnefeld P."/>
            <person name="Grohmann D."/>
        </authorList>
    </citation>
    <scope>FUNCTION AS AN ENDODEOXYNUCLEASE</scope>
    <scope>CATALYTIC ACTIVITY</scope>
    <scope>COFACTOR</scope>
    <scope>ACTIVITY REGULATION</scope>
    <scope>BIOPHYSICOCHEMICAL PROPERTIES</scope>
    <scope>DOMAIN</scope>
    <scope>DNA-BINDING</scope>
    <source>
        <strain>ATCC 43067 / DSM 2661 / JAL-1 / JCM 10045 / NBRC 100440</strain>
    </source>
</reference>
<reference key="3">
    <citation type="journal article" date="2016" name="PLoS ONE">
        <title>Mechanistic insights into archaeal and human Argonaute substrate binding and cleavage properties.</title>
        <authorList>
            <person name="Willkomm S."/>
            <person name="Zander A."/>
            <person name="Grohmann D."/>
            <person name="Restle T."/>
        </authorList>
    </citation>
    <scope>FUNCTION</scope>
    <scope>SUBSTRATE AND TARGET BINDING</scope>
    <scope>MUTAGENESIS OF TYR-442</scope>
    <source>
        <strain>ATCC 43067 / DSM 2661 / JAL-1 / JCM 10045 / NBRC 100440</strain>
    </source>
</reference>
<reference key="4">
    <citation type="journal article" date="2017" name="Nat. Microbiol.">
        <title>Guide-independent DNA cleavage by archaeal Argonaute from Methanocaldococcus jannaschii.</title>
        <authorList>
            <person name="Zander A."/>
            <person name="Willkomm S."/>
            <person name="Ofer S."/>
            <person name="van Wolferen M."/>
            <person name="Egert L."/>
            <person name="Buchmeier S."/>
            <person name="Stoeckl S."/>
            <person name="Tinnefeld P."/>
            <person name="Schneider S."/>
            <person name="Klingl A."/>
            <person name="Albers S.V."/>
            <person name="Werner F."/>
            <person name="Grohmann D."/>
        </authorList>
    </citation>
    <scope>FUNCTION</scope>
    <scope>ACTIVITY REGULATION</scope>
    <scope>INDUCTION</scope>
    <scope>MUTAGENESIS OF TYR-194; HIS-213; TYR-217; GLU-246; ASP-438; LYS-483 AND GLU-541</scope>
    <source>
        <strain>ATCC 43067 / DSM 2661 / JAL-1 / JCM 10045 / NBRC 100440</strain>
    </source>
</reference>
<reference evidence="13 14" key="5">
    <citation type="journal article" date="2017" name="Nat. Microbiol.">
        <title>Structural and mechanistic insights into an archaeal DNA-guided Argonaute protein.</title>
        <authorList>
            <person name="Willkomm S."/>
            <person name="Oellig C.A."/>
            <person name="Zander A."/>
            <person name="Restle T."/>
            <person name="Keegan R."/>
            <person name="Grohmann D."/>
            <person name="Schneider S."/>
        </authorList>
    </citation>
    <scope>X-RAY CRYSTALLOGRAPHY (2.29 ANGSTROMS) IN COMPLEX WITH METAL WITH AND WITHOUT GUIDE DNA</scope>
    <scope>FUNCTION</scope>
    <scope>COFACTOR</scope>
    <scope>DOMAIN</scope>
    <scope>MUTAGENESIS OF TYR-194; HIS-213; TYR-217; GLU-246; LEU-270; TRP-274; LYS-435; ASP-438; GLN-457; ASN-458; GLN-479; LYS-483; PHE-572; GLN-574 AND ASN-575</scope>
    <scope>DNA-BINDING</scope>
</reference>
<dbReference type="EC" id="3.1.24.-" evidence="4"/>
<dbReference type="EMBL" id="L77117">
    <property type="protein sequence ID" value="AAB99334.1"/>
    <property type="molecule type" value="Genomic_DNA"/>
</dbReference>
<dbReference type="PIR" id="H64464">
    <property type="entry name" value="H64464"/>
</dbReference>
<dbReference type="RefSeq" id="WP_010870838.1">
    <property type="nucleotide sequence ID" value="NC_000909.1"/>
</dbReference>
<dbReference type="PDB" id="5G5S">
    <property type="method" value="X-ray"/>
    <property type="resolution" value="2.29 A"/>
    <property type="chains" value="A=1-713"/>
</dbReference>
<dbReference type="PDB" id="5G5T">
    <property type="method" value="X-ray"/>
    <property type="resolution" value="2.85 A"/>
    <property type="chains" value="A=1-713"/>
</dbReference>
<dbReference type="PDBsum" id="5G5S"/>
<dbReference type="PDBsum" id="5G5T"/>
<dbReference type="SMR" id="Q58717"/>
<dbReference type="STRING" id="243232.MJ_1321"/>
<dbReference type="PaxDb" id="243232-MJ_1321"/>
<dbReference type="EnsemblBacteria" id="AAB99334">
    <property type="protein sequence ID" value="AAB99334"/>
    <property type="gene ID" value="MJ_1321"/>
</dbReference>
<dbReference type="GeneID" id="1452223"/>
<dbReference type="KEGG" id="mja:MJ_1321"/>
<dbReference type="eggNOG" id="arCOG03890">
    <property type="taxonomic scope" value="Archaea"/>
</dbReference>
<dbReference type="HOGENOM" id="CLU_362759_0_0_2"/>
<dbReference type="InParanoid" id="Q58717"/>
<dbReference type="OrthoDB" id="65217at2157"/>
<dbReference type="Proteomes" id="UP000000805">
    <property type="component" value="Chromosome"/>
</dbReference>
<dbReference type="GO" id="GO:0003677">
    <property type="term" value="F:DNA binding"/>
    <property type="evidence" value="ECO:0007669"/>
    <property type="project" value="UniProtKB-KW"/>
</dbReference>
<dbReference type="GO" id="GO:0004520">
    <property type="term" value="F:DNA endonuclease activity"/>
    <property type="evidence" value="ECO:0000314"/>
    <property type="project" value="UniProtKB"/>
</dbReference>
<dbReference type="GO" id="GO:0046872">
    <property type="term" value="F:metal ion binding"/>
    <property type="evidence" value="ECO:0007669"/>
    <property type="project" value="UniProtKB-KW"/>
</dbReference>
<dbReference type="GO" id="GO:0003723">
    <property type="term" value="F:RNA binding"/>
    <property type="evidence" value="ECO:0007669"/>
    <property type="project" value="InterPro"/>
</dbReference>
<dbReference type="GO" id="GO:0044355">
    <property type="term" value="P:clearance of foreign intracellular DNA"/>
    <property type="evidence" value="ECO:0000314"/>
    <property type="project" value="UniProtKB"/>
</dbReference>
<dbReference type="GO" id="GO:0051607">
    <property type="term" value="P:defense response to virus"/>
    <property type="evidence" value="ECO:0007669"/>
    <property type="project" value="UniProtKB-KW"/>
</dbReference>
<dbReference type="CDD" id="cd04659">
    <property type="entry name" value="Piwi_piwi-like_ProArk"/>
    <property type="match status" value="1"/>
</dbReference>
<dbReference type="Gene3D" id="3.40.50.2300">
    <property type="match status" value="1"/>
</dbReference>
<dbReference type="Gene3D" id="3.30.420.10">
    <property type="entry name" value="Ribonuclease H-like superfamily/Ribonuclease H"/>
    <property type="match status" value="1"/>
</dbReference>
<dbReference type="InterPro" id="IPR054390">
    <property type="entry name" value="Ago_N_arc"/>
</dbReference>
<dbReference type="InterPro" id="IPR054436">
    <property type="entry name" value="Ago_PAZ_methanocaldococcus"/>
</dbReference>
<dbReference type="InterPro" id="IPR003100">
    <property type="entry name" value="PAZ_dom"/>
</dbReference>
<dbReference type="InterPro" id="IPR036085">
    <property type="entry name" value="PAZ_dom_sf"/>
</dbReference>
<dbReference type="InterPro" id="IPR003165">
    <property type="entry name" value="Piwi"/>
</dbReference>
<dbReference type="InterPro" id="IPR012337">
    <property type="entry name" value="RNaseH-like_sf"/>
</dbReference>
<dbReference type="InterPro" id="IPR036397">
    <property type="entry name" value="RNaseH_sf"/>
</dbReference>
<dbReference type="Pfam" id="PF22333">
    <property type="entry name" value="Ago_PAZ_arc"/>
    <property type="match status" value="1"/>
</dbReference>
<dbReference type="Pfam" id="PF22138">
    <property type="entry name" value="MjAgo_N-like"/>
    <property type="match status" value="1"/>
</dbReference>
<dbReference type="Pfam" id="PF02171">
    <property type="entry name" value="Piwi"/>
    <property type="match status" value="1"/>
</dbReference>
<dbReference type="SMART" id="SM00950">
    <property type="entry name" value="Piwi"/>
    <property type="match status" value="1"/>
</dbReference>
<dbReference type="SUPFAM" id="SSF101690">
    <property type="entry name" value="PAZ domain"/>
    <property type="match status" value="1"/>
</dbReference>
<dbReference type="SUPFAM" id="SSF53098">
    <property type="entry name" value="Ribonuclease H-like"/>
    <property type="match status" value="1"/>
</dbReference>
<dbReference type="PROSITE" id="PS50821">
    <property type="entry name" value="PAZ"/>
    <property type="match status" value="1"/>
</dbReference>
<dbReference type="PROSITE" id="PS50822">
    <property type="entry name" value="PIWI"/>
    <property type="match status" value="1"/>
</dbReference>